<sequence>MGGCGSADSWVEAAPAQGWPAQYGDAANSSYTTTNGATNLTLRWTRSVKGSLAAGPALSARGYLALNGQTPAGCSLMEWQNDNNGRQRWCVRLVQGGGFAGPLFDGFDNLYVGQPGAIISFPPTQWTRWRQPVIGMPSTPRFLGHGRLLVSTHLGQLLVFDTRRGMVVGSPVDLVDGIDPTDATRGLADCAPARPGCPVAAAPAFSSVNGTVVVSVWQPGEPAAKLVGLKYHAEQLVREWTSDAVSAGVLASPVLSADGSTVYVNGRDHRLWALNAADGKAKWSAPLGFLAQTPPALTPHGLIVSGGGPDTALAAFRDAGDHAEGAWRRDDVTALSTASLAGTGVGYTVISGPNHDGTPGLSLLVFDPANGHTVNSYPLPGATGYPVGVSVGNDRRVVTATSDGQVYSFAP</sequence>
<organism>
    <name type="scientific">Mycobacterium tuberculosis (strain ATCC 25618 / H37Rv)</name>
    <dbReference type="NCBI Taxonomy" id="83332"/>
    <lineage>
        <taxon>Bacteria</taxon>
        <taxon>Bacillati</taxon>
        <taxon>Actinomycetota</taxon>
        <taxon>Actinomycetes</taxon>
        <taxon>Mycobacteriales</taxon>
        <taxon>Mycobacteriaceae</taxon>
        <taxon>Mycobacterium</taxon>
        <taxon>Mycobacterium tuberculosis complex</taxon>
    </lineage>
</organism>
<accession>I6XFZ8</accession>
<name>Y3035_MYCTU</name>
<keyword id="KW-0903">Direct protein sequencing</keyword>
<keyword id="KW-1185">Reference proteome</keyword>
<evidence type="ECO:0000269" key="1">
    <source>
    </source>
</evidence>
<evidence type="ECO:0000305" key="2">
    <source>
    </source>
</evidence>
<evidence type="ECO:0000312" key="3">
    <source>
        <dbReference type="EMBL" id="AFN51024.1"/>
    </source>
</evidence>
<evidence type="ECO:0000312" key="4">
    <source>
        <dbReference type="EMBL" id="CCP45844.1"/>
    </source>
</evidence>
<evidence type="ECO:0000312" key="5">
    <source>
        <dbReference type="EMBL" id="KBJ29079.1"/>
    </source>
</evidence>
<proteinExistence type="evidence at protein level"/>
<protein>
    <recommendedName>
        <fullName>Protein Rv3035</fullName>
    </recommendedName>
</protein>
<gene>
    <name evidence="4" type="ordered locus">Rv3035</name>
    <name evidence="3" type="ordered locus">RVBD_3035</name>
    <name evidence="5" type="ORF">P425_03163</name>
</gene>
<reference key="1">
    <citation type="journal article" date="1998" name="Nature">
        <title>Deciphering the biology of Mycobacterium tuberculosis from the complete genome sequence.</title>
        <authorList>
            <person name="Cole S.T."/>
            <person name="Brosch R."/>
            <person name="Parkhill J."/>
            <person name="Garnier T."/>
            <person name="Churcher C.M."/>
            <person name="Harris D.E."/>
            <person name="Gordon S.V."/>
            <person name="Eiglmeier K."/>
            <person name="Gas S."/>
            <person name="Barry C.E. III"/>
            <person name="Tekaia F."/>
            <person name="Badcock K."/>
            <person name="Basham D."/>
            <person name="Brown D."/>
            <person name="Chillingworth T."/>
            <person name="Connor R."/>
            <person name="Davies R.M."/>
            <person name="Devlin K."/>
            <person name="Feltwell T."/>
            <person name="Gentles S."/>
            <person name="Hamlin N."/>
            <person name="Holroyd S."/>
            <person name="Hornsby T."/>
            <person name="Jagels K."/>
            <person name="Krogh A."/>
            <person name="McLean J."/>
            <person name="Moule S."/>
            <person name="Murphy L.D."/>
            <person name="Oliver S."/>
            <person name="Osborne J."/>
            <person name="Quail M.A."/>
            <person name="Rajandream M.A."/>
            <person name="Rogers J."/>
            <person name="Rutter S."/>
            <person name="Seeger K."/>
            <person name="Skelton S."/>
            <person name="Squares S."/>
            <person name="Squares R."/>
            <person name="Sulston J.E."/>
            <person name="Taylor K."/>
            <person name="Whitehead S."/>
            <person name="Barrell B.G."/>
        </authorList>
    </citation>
    <scope>NUCLEOTIDE SEQUENCE [LARGE SCALE GENOMIC DNA]</scope>
    <source>
        <strain>ATCC 25618 / H37Rv</strain>
    </source>
</reference>
<reference key="2">
    <citation type="journal article" date="2022" name="Genomics">
        <title>Deep N-terminomics of Mycobacterium tuberculosis H37Rv extensively correct annotated encoding genes.</title>
        <authorList>
            <person name="Shi J."/>
            <person name="Meng S."/>
            <person name="Wan L."/>
            <person name="Zhang Z."/>
            <person name="Jiang S."/>
            <person name="Zhu H."/>
            <person name="Dai E."/>
            <person name="Chang L."/>
            <person name="Gao H."/>
            <person name="Wan K."/>
            <person name="Zhang L."/>
            <person name="Zhao X."/>
            <person name="Liu H."/>
            <person name="Lyu Z."/>
            <person name="Zhang Y."/>
            <person name="Xu P."/>
        </authorList>
    </citation>
    <scope>PROTEIN SEQUENCE OF 50-61</scope>
    <scope>SEQUENCE REVISION TO N-TERMINUS</scope>
    <source>
        <strain>H37Rv</strain>
    </source>
</reference>
<reference key="3">
    <citation type="submission" date="2012-12" db="EMBL/GenBank/DDBJ databases">
        <authorList>
            <person name="Lew J.M."/>
        </authorList>
    </citation>
    <scope>IDENTIFICATION</scope>
    <scope>GENOME REANNOTATION</scope>
    <source>
        <strain>ATCC 25618 / H37Rv</strain>
    </source>
</reference>
<reference key="4">
    <citation type="submission" date="2013-11" db="EMBL/GenBank/DDBJ databases">
        <title>The genome sequence of Mycobacterium tuberculosis H37Rv.</title>
        <authorList>
            <consortium name="The Broad Institute Genome Sequencing Platform"/>
            <person name="Galagan J."/>
            <person name="Kreiswirth B."/>
            <person name="Dobos K."/>
            <person name="Fortune S."/>
            <person name="Fitzgerald M."/>
            <person name="Young S.K."/>
            <person name="Zeng Q."/>
            <person name="Gargeya S."/>
            <person name="Abouelleil A."/>
            <person name="Alvarado L."/>
            <person name="Berlin A.M."/>
            <person name="Chapman S.B."/>
            <person name="Gainer-Dewar J."/>
            <person name="Goldberg J."/>
            <person name="Gnerre S."/>
            <person name="Griggs A."/>
            <person name="Gujja S."/>
            <person name="Hansen M."/>
            <person name="Howarth C."/>
            <person name="Imamovic A."/>
            <person name="Larimer J."/>
            <person name="McCowan C."/>
            <person name="Murphy C."/>
            <person name="Pearson M."/>
            <person name="Poon T."/>
            <person name="Priest M."/>
            <person name="Roberts A."/>
            <person name="Saif S."/>
            <person name="Shea T."/>
            <person name="Sykes S."/>
            <person name="Wortman J."/>
            <person name="Nusbaum C."/>
            <person name="Birren B."/>
        </authorList>
    </citation>
    <scope>NUCLEOTIDE SEQUENCE [LARGE SCALE GENOMIC DNA]</scope>
    <source>
        <strain>ATCC 25618 / H37Rv</strain>
    </source>
</reference>
<reference key="5">
    <citation type="submission" date="2014-04" db="EMBL/GenBank/DDBJ databases">
        <title>The genome sequence of Mycobacterium tuberculosis H37Rv.</title>
        <authorList>
            <consortium name="The Broad Institute Genomics Platform"/>
            <consortium name="The Broad Institute Genome Sequencing Center for Infectious Disease"/>
            <person name="Earl A.M."/>
            <person name="Kreiswirth B."/>
            <person name="Gomez J."/>
            <person name="Victor T."/>
            <person name="Desjardins C."/>
            <person name="Abeel T."/>
            <person name="Young S."/>
            <person name="Zeng Q."/>
            <person name="Gargeya S."/>
            <person name="Abouelleil A."/>
            <person name="Alvarado L."/>
            <person name="Chapman S.B."/>
            <person name="Gainer-Dewar J."/>
            <person name="Goldberg J."/>
            <person name="Griggs A."/>
            <person name="Gujja S."/>
            <person name="Hansen M."/>
            <person name="Howarth C."/>
            <person name="Imamovic A."/>
            <person name="Larimer J."/>
            <person name="Murphy C."/>
            <person name="Naylor J."/>
            <person name="Pearson M."/>
            <person name="Poon T.W."/>
            <person name="Priest M."/>
            <person name="Roberts A."/>
            <person name="Saif S."/>
            <person name="Shea T."/>
            <person name="Sykes S."/>
            <person name="Wortman J."/>
            <person name="Nusbaum C."/>
            <person name="Birren B."/>
        </authorList>
    </citation>
    <scope>NUCLEOTIDE SEQUENCE [LARGE SCALE GENOMIC DNA]</scope>
    <source>
        <strain>ATCC 25618 / H37Rv</strain>
    </source>
</reference>
<reference key="6">
    <citation type="journal article" date="2011" name="Mol. Cell. Proteomics">
        <title>Proteogenomic analysis of Mycobacterium tuberculosis by high resolution mass spectrometry.</title>
        <authorList>
            <person name="Kelkar D.S."/>
            <person name="Kumar D."/>
            <person name="Kumar P."/>
            <person name="Balakrishnan L."/>
            <person name="Muthusamy B."/>
            <person name="Yadav A.K."/>
            <person name="Shrivastava P."/>
            <person name="Marimuthu A."/>
            <person name="Anand S."/>
            <person name="Sundaram H."/>
            <person name="Kingsbury R."/>
            <person name="Harsha H.C."/>
            <person name="Nair B."/>
            <person name="Prasad T.S."/>
            <person name="Chauhan D.S."/>
            <person name="Katoch K."/>
            <person name="Katoch V.M."/>
            <person name="Kumar P."/>
            <person name="Chaerkady R."/>
            <person name="Ramachandran S."/>
            <person name="Dash D."/>
            <person name="Pandey A."/>
        </authorList>
    </citation>
    <scope>IDENTIFICATION BY MASS SPECTROMETRY [LARGE SCALE ANALYSIS]</scope>
    <source>
        <strain>ATCC 25618 / H37Rv</strain>
    </source>
</reference>
<dbReference type="EMBL" id="AL123456">
    <property type="protein sequence ID" value="CCP45844.1"/>
    <property type="status" value="ALT_INIT"/>
    <property type="molecule type" value="Genomic_DNA"/>
</dbReference>
<dbReference type="EMBL" id="CP003248">
    <property type="protein sequence ID" value="AFN51024.1"/>
    <property type="status" value="ALT_INIT"/>
    <property type="molecule type" value="Genomic_DNA"/>
</dbReference>
<dbReference type="EMBL" id="JLDD01000038">
    <property type="protein sequence ID" value="KBJ29079.1"/>
    <property type="status" value="ALT_INIT"/>
    <property type="molecule type" value="Genomic_DNA"/>
</dbReference>
<dbReference type="RefSeq" id="NP_217551.1">
    <property type="nucleotide sequence ID" value="NC_000962.3"/>
</dbReference>
<dbReference type="RefSeq" id="WP_003415938.1">
    <property type="nucleotide sequence ID" value="NC_000962.3"/>
</dbReference>
<dbReference type="SMR" id="I6XFZ8"/>
<dbReference type="STRING" id="83332.Rv3035"/>
<dbReference type="PaxDb" id="83332-Rv3035"/>
<dbReference type="DNASU" id="887842"/>
<dbReference type="GeneID" id="887842"/>
<dbReference type="KEGG" id="mtu:Rv3035"/>
<dbReference type="KEGG" id="mtv:RVBD_3035"/>
<dbReference type="PATRIC" id="fig|83332.111.peg.3382"/>
<dbReference type="TubercuList" id="Rv3035"/>
<dbReference type="eggNOG" id="COG1520">
    <property type="taxonomic scope" value="Bacteria"/>
</dbReference>
<dbReference type="InParanoid" id="I6XFZ8"/>
<dbReference type="OrthoDB" id="6189277at2"/>
<dbReference type="Proteomes" id="UP000001584">
    <property type="component" value="Chromosome"/>
</dbReference>
<dbReference type="Gene3D" id="2.130.10.10">
    <property type="entry name" value="YVTN repeat-like/Quinoprotein amine dehydrogenase"/>
    <property type="match status" value="1"/>
</dbReference>
<dbReference type="InterPro" id="IPR002372">
    <property type="entry name" value="PQQ_rpt_dom"/>
</dbReference>
<dbReference type="InterPro" id="IPR011047">
    <property type="entry name" value="Quinoprotein_ADH-like_sf"/>
</dbReference>
<dbReference type="InterPro" id="IPR015943">
    <property type="entry name" value="WD40/YVTN_repeat-like_dom_sf"/>
</dbReference>
<dbReference type="Pfam" id="PF13360">
    <property type="entry name" value="PQQ_2"/>
    <property type="match status" value="1"/>
</dbReference>
<dbReference type="SUPFAM" id="SSF50998">
    <property type="entry name" value="Quinoprotein alcohol dehydrogenase-like"/>
    <property type="match status" value="1"/>
</dbReference>
<feature type="chain" id="PRO_0000432519" description="Protein Rv3035">
    <location>
        <begin position="1"/>
        <end position="411"/>
    </location>
</feature>
<comment type="caution">
    <text evidence="2">The predicted start codon is CTG.</text>
</comment>
<comment type="sequence caution" evidence="1">
    <conflict type="erroneous initiation">
        <sequence resource="EMBL-CDS" id="AFN51024"/>
    </conflict>
    <text>Truncated N-terminus.</text>
</comment>
<comment type="sequence caution" evidence="1">
    <conflict type="erroneous initiation">
        <sequence resource="EMBL-CDS" id="CCP45844"/>
    </conflict>
    <text>Truncated N-terminus.</text>
</comment>
<comment type="sequence caution" evidence="1">
    <conflict type="erroneous initiation">
        <sequence resource="EMBL-CDS" id="KBJ29079"/>
    </conflict>
    <text>Truncated N-terminus.</text>
</comment>